<organism>
    <name type="scientific">Streptococcus pyogenes serotype M3 (strain SSI-1)</name>
    <dbReference type="NCBI Taxonomy" id="193567"/>
    <lineage>
        <taxon>Bacteria</taxon>
        <taxon>Bacillati</taxon>
        <taxon>Bacillota</taxon>
        <taxon>Bacilli</taxon>
        <taxon>Lactobacillales</taxon>
        <taxon>Streptococcaceae</taxon>
        <taxon>Streptococcus</taxon>
    </lineage>
</organism>
<accession>P0DG15</accession>
<accession>Q878W2</accession>
<accession>Q8K722</accession>
<evidence type="ECO:0000255" key="1">
    <source>
        <dbReference type="PROSITE-ProRule" id="PRU00208"/>
    </source>
</evidence>
<evidence type="ECO:0000255" key="2">
    <source>
        <dbReference type="PROSITE-ProRule" id="PRU01024"/>
    </source>
</evidence>
<sequence length="462" mass="51751">MVSPRKGKRIRMLKKNDIIQVAISDLSHEGAGVAKHDGFVFFVDNALPEEVIDMRVLKVNKNSGFGKVEAYHYLSPARNADVNLTYLRTGIADLGHLTYEDQLTFKKKQVQDSLYKIAGISDVTVESTIGMTEPLAYRNKAQVPVRRVNGQLETGFFRKHSHDLIPISDYYIQDKEIDRLINFTRDLLRRFDIKPYDETEQTGLLRNIVVRRGHYSGEMMLVLVTTRPKVFRVDQVIEKIVEAFPAVVSIIQNINDKNTNAIFGKDFKTLYGKDTITDSMLGNNYAISAQSFYQVNTVMAEKLYQTAIAFSDLSKDDIVIDAYSGIGTIGLSFAKTVKAVYGVEVIEAAVRDAQHNAALNGITNAYFVADTAEHAMATWAKDGIKPSVILVDPPRKGLTESFIQASVAMGPQKITYVSCNPATMARDIKRYQELGYKLAKVQPVDLFPQTHHVECVVLLIKE</sequence>
<comment type="similarity">
    <text evidence="2">Belongs to the class I-like SAM-binding methyltransferase superfamily. RNA M5U methyltransferase family.</text>
</comment>
<name>Y1024_STRPQ</name>
<feature type="chain" id="PRO_0000411597" description="Uncharacterized RNA methyltransferase SPs0836">
    <location>
        <begin position="1"/>
        <end position="462"/>
    </location>
</feature>
<feature type="domain" description="TRAM" evidence="1">
    <location>
        <begin position="12"/>
        <end position="70"/>
    </location>
</feature>
<feature type="active site" description="Nucleophile" evidence="2">
    <location>
        <position position="419"/>
    </location>
</feature>
<feature type="binding site" evidence="2">
    <location>
        <position position="294"/>
    </location>
    <ligand>
        <name>S-adenosyl-L-methionine</name>
        <dbReference type="ChEBI" id="CHEBI:59789"/>
    </ligand>
</feature>
<feature type="binding site" evidence="2">
    <location>
        <position position="323"/>
    </location>
    <ligand>
        <name>S-adenosyl-L-methionine</name>
        <dbReference type="ChEBI" id="CHEBI:59789"/>
    </ligand>
</feature>
<feature type="binding site" evidence="2">
    <location>
        <position position="344"/>
    </location>
    <ligand>
        <name>S-adenosyl-L-methionine</name>
        <dbReference type="ChEBI" id="CHEBI:59789"/>
    </ligand>
</feature>
<feature type="binding site" evidence="2">
    <location>
        <position position="392"/>
    </location>
    <ligand>
        <name>S-adenosyl-L-methionine</name>
        <dbReference type="ChEBI" id="CHEBI:59789"/>
    </ligand>
</feature>
<dbReference type="EC" id="2.1.1.-"/>
<dbReference type="EMBL" id="BA000034">
    <property type="protein sequence ID" value="BAC63931.1"/>
    <property type="molecule type" value="Genomic_DNA"/>
</dbReference>
<dbReference type="SMR" id="P0DG15"/>
<dbReference type="KEGG" id="sps:SPs0836"/>
<dbReference type="HOGENOM" id="CLU_014689_7_0_9"/>
<dbReference type="GO" id="GO:0070041">
    <property type="term" value="F:rRNA (uridine-C5-)-methyltransferase activity"/>
    <property type="evidence" value="ECO:0007669"/>
    <property type="project" value="TreeGrafter"/>
</dbReference>
<dbReference type="GO" id="GO:0070475">
    <property type="term" value="P:rRNA base methylation"/>
    <property type="evidence" value="ECO:0007669"/>
    <property type="project" value="TreeGrafter"/>
</dbReference>
<dbReference type="CDD" id="cd02440">
    <property type="entry name" value="AdoMet_MTases"/>
    <property type="match status" value="1"/>
</dbReference>
<dbReference type="FunFam" id="3.40.50.150:FF:000009">
    <property type="entry name" value="23S rRNA (Uracil(1939)-C(5))-methyltransferase RlmD"/>
    <property type="match status" value="1"/>
</dbReference>
<dbReference type="FunFam" id="2.40.50.1070:FF:000003">
    <property type="entry name" value="23S rRNA (Uracil-5-)-methyltransferase RumA"/>
    <property type="match status" value="1"/>
</dbReference>
<dbReference type="Gene3D" id="2.40.50.1070">
    <property type="match status" value="1"/>
</dbReference>
<dbReference type="Gene3D" id="2.40.50.140">
    <property type="entry name" value="Nucleic acid-binding proteins"/>
    <property type="match status" value="1"/>
</dbReference>
<dbReference type="Gene3D" id="3.40.50.150">
    <property type="entry name" value="Vaccinia Virus protein VP39"/>
    <property type="match status" value="1"/>
</dbReference>
<dbReference type="InterPro" id="IPR030390">
    <property type="entry name" value="MeTrfase_TrmA_AS"/>
</dbReference>
<dbReference type="InterPro" id="IPR030391">
    <property type="entry name" value="MeTrfase_TrmA_CS"/>
</dbReference>
<dbReference type="InterPro" id="IPR012340">
    <property type="entry name" value="NA-bd_OB-fold"/>
</dbReference>
<dbReference type="InterPro" id="IPR029063">
    <property type="entry name" value="SAM-dependent_MTases_sf"/>
</dbReference>
<dbReference type="InterPro" id="IPR002792">
    <property type="entry name" value="TRAM_dom"/>
</dbReference>
<dbReference type="InterPro" id="IPR010280">
    <property type="entry name" value="U5_MeTrfase_fam"/>
</dbReference>
<dbReference type="NCBIfam" id="TIGR00479">
    <property type="entry name" value="rumA"/>
    <property type="match status" value="1"/>
</dbReference>
<dbReference type="PANTHER" id="PTHR11061">
    <property type="entry name" value="RNA M5U METHYLTRANSFERASE"/>
    <property type="match status" value="1"/>
</dbReference>
<dbReference type="PANTHER" id="PTHR11061:SF30">
    <property type="entry name" value="TRNA (URACIL(54)-C(5))-METHYLTRANSFERASE"/>
    <property type="match status" value="1"/>
</dbReference>
<dbReference type="Pfam" id="PF01938">
    <property type="entry name" value="TRAM"/>
    <property type="match status" value="1"/>
</dbReference>
<dbReference type="Pfam" id="PF05958">
    <property type="entry name" value="tRNA_U5-meth_tr"/>
    <property type="match status" value="1"/>
</dbReference>
<dbReference type="SUPFAM" id="SSF50249">
    <property type="entry name" value="Nucleic acid-binding proteins"/>
    <property type="match status" value="1"/>
</dbReference>
<dbReference type="SUPFAM" id="SSF53335">
    <property type="entry name" value="S-adenosyl-L-methionine-dependent methyltransferases"/>
    <property type="match status" value="1"/>
</dbReference>
<dbReference type="PROSITE" id="PS51687">
    <property type="entry name" value="SAM_MT_RNA_M5U"/>
    <property type="match status" value="1"/>
</dbReference>
<dbReference type="PROSITE" id="PS50926">
    <property type="entry name" value="TRAM"/>
    <property type="match status" value="1"/>
</dbReference>
<dbReference type="PROSITE" id="PS01230">
    <property type="entry name" value="TRMA_1"/>
    <property type="match status" value="1"/>
</dbReference>
<dbReference type="PROSITE" id="PS01231">
    <property type="entry name" value="TRMA_2"/>
    <property type="match status" value="1"/>
</dbReference>
<proteinExistence type="inferred from homology"/>
<reference key="1">
    <citation type="journal article" date="2003" name="Genome Res.">
        <title>Genome sequence of an M3 strain of Streptococcus pyogenes reveals a large-scale genomic rearrangement in invasive strains and new insights into phage evolution.</title>
        <authorList>
            <person name="Nakagawa I."/>
            <person name="Kurokawa K."/>
            <person name="Yamashita A."/>
            <person name="Nakata M."/>
            <person name="Tomiyasu Y."/>
            <person name="Okahashi N."/>
            <person name="Kawabata S."/>
            <person name="Yamazaki K."/>
            <person name="Shiba T."/>
            <person name="Yasunaga T."/>
            <person name="Hayashi H."/>
            <person name="Hattori M."/>
            <person name="Hamada S."/>
        </authorList>
    </citation>
    <scope>NUCLEOTIDE SEQUENCE [LARGE SCALE GENOMIC DNA]</scope>
    <source>
        <strain>SSI-1</strain>
    </source>
</reference>
<gene>
    <name type="ordered locus">SPs0836</name>
</gene>
<protein>
    <recommendedName>
        <fullName>Uncharacterized RNA methyltransferase SPs0836</fullName>
        <ecNumber>2.1.1.-</ecNumber>
    </recommendedName>
</protein>
<keyword id="KW-0489">Methyltransferase</keyword>
<keyword id="KW-0949">S-adenosyl-L-methionine</keyword>
<keyword id="KW-0808">Transferase</keyword>